<organism>
    <name type="scientific">Dictyostelium discoideum</name>
    <name type="common">Social amoeba</name>
    <dbReference type="NCBI Taxonomy" id="44689"/>
    <lineage>
        <taxon>Eukaryota</taxon>
        <taxon>Amoebozoa</taxon>
        <taxon>Evosea</taxon>
        <taxon>Eumycetozoa</taxon>
        <taxon>Dictyostelia</taxon>
        <taxon>Dictyosteliales</taxon>
        <taxon>Dictyosteliaceae</taxon>
        <taxon>Dictyostelium</taxon>
    </lineage>
</organism>
<feature type="chain" id="PRO_0000331479" description="Protein EI24 homolog">
    <location>
        <begin position="1"/>
        <end position="307"/>
    </location>
</feature>
<feature type="transmembrane region" description="Helical" evidence="1">
    <location>
        <begin position="53"/>
        <end position="73"/>
    </location>
</feature>
<feature type="transmembrane region" description="Helical" evidence="1">
    <location>
        <begin position="92"/>
        <end position="112"/>
    </location>
</feature>
<feature type="transmembrane region" description="Helical" evidence="1">
    <location>
        <begin position="153"/>
        <end position="173"/>
    </location>
</feature>
<feature type="transmembrane region" description="Helical" evidence="1">
    <location>
        <begin position="175"/>
        <end position="195"/>
    </location>
</feature>
<feature type="transmembrane region" description="Helical" evidence="1">
    <location>
        <begin position="225"/>
        <end position="245"/>
    </location>
</feature>
<feature type="transmembrane region" description="Helical" evidence="1">
    <location>
        <begin position="260"/>
        <end position="280"/>
    </location>
</feature>
<feature type="glycosylation site" description="N-linked (GlcNAc...) asparagine" evidence="1">
    <location>
        <position position="135"/>
    </location>
</feature>
<accession>Q54PW9</accession>
<keyword id="KW-0325">Glycoprotein</keyword>
<keyword id="KW-0472">Membrane</keyword>
<keyword id="KW-1185">Reference proteome</keyword>
<keyword id="KW-0812">Transmembrane</keyword>
<keyword id="KW-1133">Transmembrane helix</keyword>
<gene>
    <name type="ORF">DDB_G0284253</name>
</gene>
<name>EI24_DICDI</name>
<sequence length="307" mass="35933">METFKEYVTKRIDNTIPQVKEMFKLIWLGVADSMKLKGAIIRTIKSEVLRKNFIHCIFLNGIIFLGTYLIYLYWVSPMLNYLLNHFPTLSNMFTIIYFSLWVYPVYIFSIIANSKWYTEIAKESFVISGRTTFANSTNGILSSFVDEIYRNLLFGVILVMSAIIAFIPYTNFINFVIITWLYSFWCFDYKWILRGKWNLLQRIQYFETHWAYMFGYGLIFTTCSFFFPMLIGNAIFSILYPLFIILSISAKPTKMVNQDGILPKQIPIFYVPEIIVNVILKLYVKYKNTRGAAKSTTPSPSPTTKQN</sequence>
<proteinExistence type="inferred from homology"/>
<reference key="1">
    <citation type="journal article" date="2005" name="Nature">
        <title>The genome of the social amoeba Dictyostelium discoideum.</title>
        <authorList>
            <person name="Eichinger L."/>
            <person name="Pachebat J.A."/>
            <person name="Gloeckner G."/>
            <person name="Rajandream M.A."/>
            <person name="Sucgang R."/>
            <person name="Berriman M."/>
            <person name="Song J."/>
            <person name="Olsen R."/>
            <person name="Szafranski K."/>
            <person name="Xu Q."/>
            <person name="Tunggal B."/>
            <person name="Kummerfeld S."/>
            <person name="Madera M."/>
            <person name="Konfortov B.A."/>
            <person name="Rivero F."/>
            <person name="Bankier A.T."/>
            <person name="Lehmann R."/>
            <person name="Hamlin N."/>
            <person name="Davies R."/>
            <person name="Gaudet P."/>
            <person name="Fey P."/>
            <person name="Pilcher K."/>
            <person name="Chen G."/>
            <person name="Saunders D."/>
            <person name="Sodergren E.J."/>
            <person name="Davis P."/>
            <person name="Kerhornou A."/>
            <person name="Nie X."/>
            <person name="Hall N."/>
            <person name="Anjard C."/>
            <person name="Hemphill L."/>
            <person name="Bason N."/>
            <person name="Farbrother P."/>
            <person name="Desany B."/>
            <person name="Just E."/>
            <person name="Morio T."/>
            <person name="Rost R."/>
            <person name="Churcher C.M."/>
            <person name="Cooper J."/>
            <person name="Haydock S."/>
            <person name="van Driessche N."/>
            <person name="Cronin A."/>
            <person name="Goodhead I."/>
            <person name="Muzny D.M."/>
            <person name="Mourier T."/>
            <person name="Pain A."/>
            <person name="Lu M."/>
            <person name="Harper D."/>
            <person name="Lindsay R."/>
            <person name="Hauser H."/>
            <person name="James K.D."/>
            <person name="Quiles M."/>
            <person name="Madan Babu M."/>
            <person name="Saito T."/>
            <person name="Buchrieser C."/>
            <person name="Wardroper A."/>
            <person name="Felder M."/>
            <person name="Thangavelu M."/>
            <person name="Johnson D."/>
            <person name="Knights A."/>
            <person name="Loulseged H."/>
            <person name="Mungall K.L."/>
            <person name="Oliver K."/>
            <person name="Price C."/>
            <person name="Quail M.A."/>
            <person name="Urushihara H."/>
            <person name="Hernandez J."/>
            <person name="Rabbinowitsch E."/>
            <person name="Steffen D."/>
            <person name="Sanders M."/>
            <person name="Ma J."/>
            <person name="Kohara Y."/>
            <person name="Sharp S."/>
            <person name="Simmonds M.N."/>
            <person name="Spiegler S."/>
            <person name="Tivey A."/>
            <person name="Sugano S."/>
            <person name="White B."/>
            <person name="Walker D."/>
            <person name="Woodward J.R."/>
            <person name="Winckler T."/>
            <person name="Tanaka Y."/>
            <person name="Shaulsky G."/>
            <person name="Schleicher M."/>
            <person name="Weinstock G.M."/>
            <person name="Rosenthal A."/>
            <person name="Cox E.C."/>
            <person name="Chisholm R.L."/>
            <person name="Gibbs R.A."/>
            <person name="Loomis W.F."/>
            <person name="Platzer M."/>
            <person name="Kay R.R."/>
            <person name="Williams J.G."/>
            <person name="Dear P.H."/>
            <person name="Noegel A.A."/>
            <person name="Barrell B.G."/>
            <person name="Kuspa A."/>
        </authorList>
    </citation>
    <scope>NUCLEOTIDE SEQUENCE [LARGE SCALE GENOMIC DNA]</scope>
    <source>
        <strain>AX4</strain>
    </source>
</reference>
<comment type="subcellular location">
    <subcellularLocation>
        <location evidence="2">Membrane</location>
        <topology evidence="2">Multi-pass membrane protein</topology>
    </subcellularLocation>
</comment>
<comment type="similarity">
    <text evidence="2">Belongs to the EI24 family.</text>
</comment>
<protein>
    <recommendedName>
        <fullName>Protein EI24 homolog</fullName>
    </recommendedName>
</protein>
<dbReference type="EMBL" id="AAFI02000064">
    <property type="protein sequence ID" value="EAL65315.1"/>
    <property type="molecule type" value="Genomic_DNA"/>
</dbReference>
<dbReference type="RefSeq" id="XP_638676.1">
    <property type="nucleotide sequence ID" value="XM_633584.1"/>
</dbReference>
<dbReference type="FunCoup" id="Q54PW9">
    <property type="interactions" value="253"/>
</dbReference>
<dbReference type="GlyGen" id="Q54PW9">
    <property type="glycosylation" value="1 site"/>
</dbReference>
<dbReference type="PaxDb" id="44689-DDB0185926"/>
<dbReference type="EnsemblProtists" id="EAL65315">
    <property type="protein sequence ID" value="EAL65315"/>
    <property type="gene ID" value="DDB_G0284253"/>
</dbReference>
<dbReference type="GeneID" id="8624505"/>
<dbReference type="KEGG" id="ddi:DDB_G0284253"/>
<dbReference type="dictyBase" id="DDB_G0284253">
    <property type="gene designation" value="ei24"/>
</dbReference>
<dbReference type="VEuPathDB" id="AmoebaDB:DDB_G0284253"/>
<dbReference type="eggNOG" id="KOG3966">
    <property type="taxonomic scope" value="Eukaryota"/>
</dbReference>
<dbReference type="HOGENOM" id="CLU_031164_1_1_1"/>
<dbReference type="InParanoid" id="Q54PW9"/>
<dbReference type="OMA" id="CMLMMEV"/>
<dbReference type="PhylomeDB" id="Q54PW9"/>
<dbReference type="PRO" id="PR:Q54PW9"/>
<dbReference type="Proteomes" id="UP000002195">
    <property type="component" value="Chromosome 4"/>
</dbReference>
<dbReference type="GO" id="GO:0005783">
    <property type="term" value="C:endoplasmic reticulum"/>
    <property type="evidence" value="ECO:0000314"/>
    <property type="project" value="dictyBase"/>
</dbReference>
<dbReference type="GO" id="GO:0016020">
    <property type="term" value="C:membrane"/>
    <property type="evidence" value="ECO:0007669"/>
    <property type="project" value="UniProtKB-SubCell"/>
</dbReference>
<dbReference type="GO" id="GO:0006974">
    <property type="term" value="P:DNA damage response"/>
    <property type="evidence" value="ECO:0000315"/>
    <property type="project" value="dictyBase"/>
</dbReference>
<dbReference type="GO" id="GO:0016236">
    <property type="term" value="P:macroautophagy"/>
    <property type="evidence" value="ECO:0000318"/>
    <property type="project" value="GO_Central"/>
</dbReference>
<dbReference type="GO" id="GO:0010629">
    <property type="term" value="P:negative regulation of gene expression"/>
    <property type="evidence" value="ECO:0000315"/>
    <property type="project" value="dictyBase"/>
</dbReference>
<dbReference type="GO" id="GO:0010628">
    <property type="term" value="P:positive regulation of gene expression"/>
    <property type="evidence" value="ECO:0000315"/>
    <property type="project" value="dictyBase"/>
</dbReference>
<dbReference type="PANTHER" id="PTHR21389:SF0">
    <property type="entry name" value="ETOPOSIDE-INDUCED PROTEIN 2.4 HOMOLOG"/>
    <property type="match status" value="1"/>
</dbReference>
<dbReference type="PANTHER" id="PTHR21389">
    <property type="entry name" value="P53 INDUCED PROTEIN"/>
    <property type="match status" value="1"/>
</dbReference>
<dbReference type="Pfam" id="PF07264">
    <property type="entry name" value="EI24"/>
    <property type="match status" value="1"/>
</dbReference>
<evidence type="ECO:0000255" key="1"/>
<evidence type="ECO:0000305" key="2"/>